<evidence type="ECO:0000255" key="1">
    <source>
        <dbReference type="PROSITE-ProRule" id="PRU00273"/>
    </source>
</evidence>
<evidence type="ECO:0000269" key="2">
    <source>
    </source>
</evidence>
<evidence type="ECO:0000305" key="3"/>
<accession>P09932</accession>
<accession>D6VRC8</accession>
<accession>Q12183</accession>
<proteinExistence type="evidence at protein level"/>
<protein>
    <recommendedName>
        <fullName>Homothallic switching endonuclease</fullName>
        <shortName>Ho endonuclease</shortName>
    </recommendedName>
</protein>
<comment type="function">
    <text>Initiation of mating type interconversion. This protein is a site-specific endonuclease that cleaves a site in the mat locus on chromosome III. The double-strand break is followed by a unidirectional gene conversion event that replaces the information at the mat locus by information copied from either of the two homologous loci (HMR and HML) that reside at the extremity of the chromosome III. Endonuclease expression takes place in late G1 just before cells enter S phase.</text>
</comment>
<comment type="subcellular location">
    <subcellularLocation>
        <location evidence="2">Nucleus</location>
    </subcellularLocation>
</comment>
<comment type="PTM">
    <text>Rapidly degraded via the ubiquitin-26S proteasome system through two ubiquitin-conjugating enzymes UBC2/RAD6 and UBC3/CDC34.</text>
</comment>
<comment type="miscellaneous">
    <text>The metal-binding domain form zinc-fingers that are involved in binding of the DNA.</text>
</comment>
<sequence length="586" mass="66089">MLSENTTILMANGEIKDIANVTANSYVMCADGSAARVINVTQGYQKIYNIQQKTKHRAFEGEPGRLDPRRRTVYQRLALQCTAGHKLSVRVPTKPLLEKSGRNATKYKVRWRNLQQCQTLDGRIIIIPKNHHKTFPMTVEGEFAAKRFIEEMERSKGEYFNFDIEVRDLDYLDAQLRISSCIRFGPVLAGNGVLSKFLTGRSDLVTPAVKSMAWMLGLWLGDSTTKEPEISVDSLDPKLMESLRENAKIWGLYLTVCDDHVPLRAKHVRLHYGDGPDENRKTRNLRKNNPFWKAVTILKFKRDLDGEKQIPEFMYGEHIEVREAFLAGLIDSDGYVVKKGEGPESYKIAIQTVYSSIMDGIVHISRSLGMSATVTTRSAREEIIEGRKVQCQFTYDCNVAGGTTSQNVLSYCRSGHKTREVPPIIKREPVYFSFTDDFQGESTVYGLTIEGHKNFLLGNKIEVKSCRGCCVGEQLKISQKKNLKHCVACPRKGIKYFYKDWSGKNRVCARCYGRYKFSGHHCINCKYVPEAREVKKAKDKGEKLGITPEGLPVKGPECIKCGGILQFDAVRGPHKSCGNNAGARIC</sequence>
<gene>
    <name type="primary">HO</name>
    <name type="ordered locus">YDL227C</name>
</gene>
<feature type="chain" id="PRO_0000084030" description="Homothallic switching endonuclease">
    <location>
        <begin position="1"/>
        <end position="586"/>
    </location>
</feature>
<feature type="domain" description="DOD-type homing endonuclease" evidence="1">
    <location>
        <begin position="215"/>
        <end position="370"/>
    </location>
</feature>
<feature type="sequence conflict" description="In Ref. 1; AAA34683." evidence="3" ref="1">
    <original>A</original>
    <variation>T</variation>
    <location>
        <position position="189"/>
    </location>
</feature>
<feature type="sequence conflict" description="In Ref. 1; AAA34683." evidence="3" ref="1">
    <original>S</original>
    <variation>G</variation>
    <location>
        <position position="223"/>
    </location>
</feature>
<feature type="sequence conflict" description="In Ref. 1; AAA34683." evidence="3" ref="1">
    <original>S</original>
    <variation>L</variation>
    <location>
        <position position="405"/>
    </location>
</feature>
<feature type="sequence conflict" description="In Ref. 1; AAA34683." evidence="3" ref="1">
    <original>L</original>
    <variation>H</variation>
    <location>
        <position position="475"/>
    </location>
</feature>
<organism>
    <name type="scientific">Saccharomyces cerevisiae (strain ATCC 204508 / S288c)</name>
    <name type="common">Baker's yeast</name>
    <dbReference type="NCBI Taxonomy" id="559292"/>
    <lineage>
        <taxon>Eukaryota</taxon>
        <taxon>Fungi</taxon>
        <taxon>Dikarya</taxon>
        <taxon>Ascomycota</taxon>
        <taxon>Saccharomycotina</taxon>
        <taxon>Saccharomycetes</taxon>
        <taxon>Saccharomycetales</taxon>
        <taxon>Saccharomycetaceae</taxon>
        <taxon>Saccharomyces</taxon>
    </lineage>
</organism>
<reference key="1">
    <citation type="journal article" date="1986" name="Mol. Cell. Biol.">
        <title>Structure of the Saccharomyces cerevisiae HO gene and analysis of its upstream regulatory region.</title>
        <authorList>
            <person name="Russell D.W."/>
            <person name="Jensen R."/>
            <person name="Zoller M.J."/>
            <person name="Burke J."/>
            <person name="Errede B."/>
            <person name="Smith M."/>
            <person name="Herskowitz I."/>
        </authorList>
    </citation>
    <scope>NUCLEOTIDE SEQUENCE [GENOMIC DNA]</scope>
</reference>
<reference key="2">
    <citation type="journal article" date="1995" name="Curr. Genet.">
        <title>Identification of the heterothallic mutation in HO-endonuclease of S. cerevisiae using HO/ho chimeric genes.</title>
        <authorList>
            <person name="Meiron H."/>
            <person name="Nahon E."/>
            <person name="Raveh D."/>
        </authorList>
    </citation>
    <scope>NUCLEOTIDE SEQUENCE [GENOMIC DNA]</scope>
    <source>
        <strain>ATCC 204508 / S288c</strain>
    </source>
</reference>
<reference key="3">
    <citation type="journal article" date="1997" name="Nature">
        <title>The nucleotide sequence of Saccharomyces cerevisiae chromosome IV.</title>
        <authorList>
            <person name="Jacq C."/>
            <person name="Alt-Moerbe J."/>
            <person name="Andre B."/>
            <person name="Arnold W."/>
            <person name="Bahr A."/>
            <person name="Ballesta J.P.G."/>
            <person name="Bargues M."/>
            <person name="Baron L."/>
            <person name="Becker A."/>
            <person name="Biteau N."/>
            <person name="Bloecker H."/>
            <person name="Blugeon C."/>
            <person name="Boskovic J."/>
            <person name="Brandt P."/>
            <person name="Brueckner M."/>
            <person name="Buitrago M.J."/>
            <person name="Coster F."/>
            <person name="Delaveau T."/>
            <person name="del Rey F."/>
            <person name="Dujon B."/>
            <person name="Eide L.G."/>
            <person name="Garcia-Cantalejo J.M."/>
            <person name="Goffeau A."/>
            <person name="Gomez-Peris A."/>
            <person name="Granotier C."/>
            <person name="Hanemann V."/>
            <person name="Hankeln T."/>
            <person name="Hoheisel J.D."/>
            <person name="Jaeger W."/>
            <person name="Jimenez A."/>
            <person name="Jonniaux J.-L."/>
            <person name="Kraemer C."/>
            <person name="Kuester H."/>
            <person name="Laamanen P."/>
            <person name="Legros Y."/>
            <person name="Louis E.J."/>
            <person name="Moeller-Rieker S."/>
            <person name="Monnet A."/>
            <person name="Moro M."/>
            <person name="Mueller-Auer S."/>
            <person name="Nussbaumer B."/>
            <person name="Paricio N."/>
            <person name="Paulin L."/>
            <person name="Perea J."/>
            <person name="Perez-Alonso M."/>
            <person name="Perez-Ortin J.E."/>
            <person name="Pohl T.M."/>
            <person name="Prydz H."/>
            <person name="Purnelle B."/>
            <person name="Rasmussen S.W."/>
            <person name="Remacha M.A."/>
            <person name="Revuelta J.L."/>
            <person name="Rieger M."/>
            <person name="Salom D."/>
            <person name="Saluz H.P."/>
            <person name="Saiz J.E."/>
            <person name="Saren A.-M."/>
            <person name="Schaefer M."/>
            <person name="Scharfe M."/>
            <person name="Schmidt E.R."/>
            <person name="Schneider C."/>
            <person name="Scholler P."/>
            <person name="Schwarz S."/>
            <person name="Soler-Mira A."/>
            <person name="Urrestarazu L.A."/>
            <person name="Verhasselt P."/>
            <person name="Vissers S."/>
            <person name="Voet M."/>
            <person name="Volckaert G."/>
            <person name="Wagner G."/>
            <person name="Wambutt R."/>
            <person name="Wedler E."/>
            <person name="Wedler H."/>
            <person name="Woelfl S."/>
            <person name="Harris D.E."/>
            <person name="Bowman S."/>
            <person name="Brown D."/>
            <person name="Churcher C.M."/>
            <person name="Connor R."/>
            <person name="Dedman K."/>
            <person name="Gentles S."/>
            <person name="Hamlin N."/>
            <person name="Hunt S."/>
            <person name="Jones L."/>
            <person name="McDonald S."/>
            <person name="Murphy L.D."/>
            <person name="Niblett D."/>
            <person name="Odell C."/>
            <person name="Oliver K."/>
            <person name="Rajandream M.A."/>
            <person name="Richards C."/>
            <person name="Shore L."/>
            <person name="Walsh S.V."/>
            <person name="Barrell B.G."/>
            <person name="Dietrich F.S."/>
            <person name="Mulligan J.T."/>
            <person name="Allen E."/>
            <person name="Araujo R."/>
            <person name="Aviles E."/>
            <person name="Berno A."/>
            <person name="Carpenter J."/>
            <person name="Chen E."/>
            <person name="Cherry J.M."/>
            <person name="Chung E."/>
            <person name="Duncan M."/>
            <person name="Hunicke-Smith S."/>
            <person name="Hyman R.W."/>
            <person name="Komp C."/>
            <person name="Lashkari D."/>
            <person name="Lew H."/>
            <person name="Lin D."/>
            <person name="Mosedale D."/>
            <person name="Nakahara K."/>
            <person name="Namath A."/>
            <person name="Oefner P."/>
            <person name="Oh C."/>
            <person name="Petel F.X."/>
            <person name="Roberts D."/>
            <person name="Schramm S."/>
            <person name="Schroeder M."/>
            <person name="Shogren T."/>
            <person name="Shroff N."/>
            <person name="Winant A."/>
            <person name="Yelton M.A."/>
            <person name="Botstein D."/>
            <person name="Davis R.W."/>
            <person name="Johnston M."/>
            <person name="Andrews S."/>
            <person name="Brinkman R."/>
            <person name="Cooper J."/>
            <person name="Ding H."/>
            <person name="Du Z."/>
            <person name="Favello A."/>
            <person name="Fulton L."/>
            <person name="Gattung S."/>
            <person name="Greco T."/>
            <person name="Hallsworth K."/>
            <person name="Hawkins J."/>
            <person name="Hillier L.W."/>
            <person name="Jier M."/>
            <person name="Johnson D."/>
            <person name="Johnston L."/>
            <person name="Kirsten J."/>
            <person name="Kucaba T."/>
            <person name="Langston Y."/>
            <person name="Latreille P."/>
            <person name="Le T."/>
            <person name="Mardis E."/>
            <person name="Menezes S."/>
            <person name="Miller N."/>
            <person name="Nhan M."/>
            <person name="Pauley A."/>
            <person name="Peluso D."/>
            <person name="Rifkin L."/>
            <person name="Riles L."/>
            <person name="Taich A."/>
            <person name="Trevaskis E."/>
            <person name="Vignati D."/>
            <person name="Wilcox L."/>
            <person name="Wohldman P."/>
            <person name="Vaudin M."/>
            <person name="Wilson R."/>
            <person name="Waterston R."/>
            <person name="Albermann K."/>
            <person name="Hani J."/>
            <person name="Heumann K."/>
            <person name="Kleine K."/>
            <person name="Mewes H.-W."/>
            <person name="Zollner A."/>
            <person name="Zaccaria P."/>
        </authorList>
    </citation>
    <scope>NUCLEOTIDE SEQUENCE [LARGE SCALE GENOMIC DNA]</scope>
    <source>
        <strain>ATCC 204508 / S288c</strain>
    </source>
</reference>
<reference key="4">
    <citation type="journal article" date="2014" name="G3 (Bethesda)">
        <title>The reference genome sequence of Saccharomyces cerevisiae: Then and now.</title>
        <authorList>
            <person name="Engel S.R."/>
            <person name="Dietrich F.S."/>
            <person name="Fisk D.G."/>
            <person name="Binkley G."/>
            <person name="Balakrishnan R."/>
            <person name="Costanzo M.C."/>
            <person name="Dwight S.S."/>
            <person name="Hitz B.C."/>
            <person name="Karra K."/>
            <person name="Nash R.S."/>
            <person name="Weng S."/>
            <person name="Wong E.D."/>
            <person name="Lloyd P."/>
            <person name="Skrzypek M.S."/>
            <person name="Miyasato S.R."/>
            <person name="Simison M."/>
            <person name="Cherry J.M."/>
        </authorList>
    </citation>
    <scope>GENOME REANNOTATION</scope>
    <source>
        <strain>ATCC 204508 / S288c</strain>
    </source>
</reference>
<reference key="5">
    <citation type="journal article" date="1991" name="Methods Enzymol.">
        <title>Putting the HO gene to work: practical uses for mating-type switching.</title>
        <authorList>
            <person name="Herskowitz I."/>
            <person name="Jensen R."/>
        </authorList>
    </citation>
    <scope>REVIEW</scope>
</reference>
<reference key="6">
    <citation type="journal article" date="2000" name="Proc. Natl. Acad. Sci. U.S.A.">
        <title>Functions of the DNA damage response pathway target Ho endonuclease of yeast for degradation via the ubiquitin-26S proteasome system.</title>
        <authorList>
            <person name="Kaplun L."/>
            <person name="Ivantsiv Y."/>
            <person name="Kornitzer D."/>
            <person name="Raveh D."/>
        </authorList>
    </citation>
    <scope>DEGRADATION</scope>
</reference>
<reference key="7">
    <citation type="journal article" date="2003" name="Nature">
        <title>Global analysis of protein localization in budding yeast.</title>
        <authorList>
            <person name="Huh W.-K."/>
            <person name="Falvo J.V."/>
            <person name="Gerke L.C."/>
            <person name="Carroll A.S."/>
            <person name="Howson R.W."/>
            <person name="Weissman J.S."/>
            <person name="O'Shea E.K."/>
        </authorList>
    </citation>
    <scope>SUBCELLULAR LOCATION [LARGE SCALE ANALYSIS]</scope>
</reference>
<name>HO_YEAST</name>
<dbReference type="EMBL" id="M14678">
    <property type="protein sequence ID" value="AAA34683.1"/>
    <property type="molecule type" value="Genomic_DNA"/>
</dbReference>
<dbReference type="EMBL" id="X90957">
    <property type="protein sequence ID" value="CAA62447.1"/>
    <property type="molecule type" value="Genomic_DNA"/>
</dbReference>
<dbReference type="EMBL" id="Z74275">
    <property type="protein sequence ID" value="CAA98806.1"/>
    <property type="molecule type" value="Genomic_DNA"/>
</dbReference>
<dbReference type="EMBL" id="BK006938">
    <property type="protein sequence ID" value="DAA11638.1"/>
    <property type="molecule type" value="Genomic_DNA"/>
</dbReference>
<dbReference type="PIR" id="S59301">
    <property type="entry name" value="S59301"/>
</dbReference>
<dbReference type="RefSeq" id="NP_010054.1">
    <property type="nucleotide sequence ID" value="NM_001180287.1"/>
</dbReference>
<dbReference type="SMR" id="P09932"/>
<dbReference type="BioGRID" id="31883">
    <property type="interactions" value="30"/>
</dbReference>
<dbReference type="FunCoup" id="P09932">
    <property type="interactions" value="79"/>
</dbReference>
<dbReference type="STRING" id="4932.YDL227C"/>
<dbReference type="iPTMnet" id="P09932"/>
<dbReference type="PaxDb" id="4932-YDL227C"/>
<dbReference type="PeptideAtlas" id="P09932"/>
<dbReference type="EnsemblFungi" id="YDL227C_mRNA">
    <property type="protein sequence ID" value="YDL227C"/>
    <property type="gene ID" value="YDL227C"/>
</dbReference>
<dbReference type="GeneID" id="851371"/>
<dbReference type="KEGG" id="sce:YDL227C"/>
<dbReference type="AGR" id="SGD:S000002386"/>
<dbReference type="SGD" id="S000002386">
    <property type="gene designation" value="HO"/>
</dbReference>
<dbReference type="VEuPathDB" id="FungiDB:YDL227C"/>
<dbReference type="eggNOG" id="ENOG502QUGM">
    <property type="taxonomic scope" value="Eukaryota"/>
</dbReference>
<dbReference type="HOGENOM" id="CLU_033909_0_0_1"/>
<dbReference type="InParanoid" id="P09932"/>
<dbReference type="OMA" id="YCRSGHK"/>
<dbReference type="OrthoDB" id="4037793at2759"/>
<dbReference type="BioCyc" id="YEAST:G3O-29607-MONOMER"/>
<dbReference type="BioGRID-ORCS" id="851371">
    <property type="hits" value="4 hits in 10 CRISPR screens"/>
</dbReference>
<dbReference type="PRO" id="PR:P09932"/>
<dbReference type="Proteomes" id="UP000002311">
    <property type="component" value="Chromosome IV"/>
</dbReference>
<dbReference type="RNAct" id="P09932">
    <property type="molecule type" value="protein"/>
</dbReference>
<dbReference type="GO" id="GO:0005634">
    <property type="term" value="C:nucleus"/>
    <property type="evidence" value="ECO:0007005"/>
    <property type="project" value="SGD"/>
</dbReference>
<dbReference type="GO" id="GO:0003677">
    <property type="term" value="F:DNA binding"/>
    <property type="evidence" value="ECO:0007669"/>
    <property type="project" value="UniProtKB-KW"/>
</dbReference>
<dbReference type="GO" id="GO:0004519">
    <property type="term" value="F:endonuclease activity"/>
    <property type="evidence" value="ECO:0000314"/>
    <property type="project" value="SGD"/>
</dbReference>
<dbReference type="GO" id="GO:0008270">
    <property type="term" value="F:zinc ion binding"/>
    <property type="evidence" value="ECO:0007669"/>
    <property type="project" value="UniProtKB-KW"/>
</dbReference>
<dbReference type="GO" id="GO:0007534">
    <property type="term" value="P:gene conversion at mating-type locus"/>
    <property type="evidence" value="ECO:0000314"/>
    <property type="project" value="SGD"/>
</dbReference>
<dbReference type="GO" id="GO:0016539">
    <property type="term" value="P:intein-mediated protein splicing"/>
    <property type="evidence" value="ECO:0007669"/>
    <property type="project" value="InterPro"/>
</dbReference>
<dbReference type="GO" id="GO:0007533">
    <property type="term" value="P:mating type switching"/>
    <property type="evidence" value="ECO:0000315"/>
    <property type="project" value="SGD"/>
</dbReference>
<dbReference type="FunFam" id="2.170.16.10:FF:000003">
    <property type="entry name" value="Homothallism endonuclease"/>
    <property type="match status" value="1"/>
</dbReference>
<dbReference type="FunFam" id="3.10.28.10:FF:000008">
    <property type="entry name" value="Homothallism endonuclease"/>
    <property type="match status" value="1"/>
</dbReference>
<dbReference type="Gene3D" id="2.170.16.10">
    <property type="entry name" value="Hedgehog/Intein (Hint) domain"/>
    <property type="match status" value="1"/>
</dbReference>
<dbReference type="Gene3D" id="3.10.28.10">
    <property type="entry name" value="Homing endonucleases"/>
    <property type="match status" value="2"/>
</dbReference>
<dbReference type="InterPro" id="IPR003587">
    <property type="entry name" value="Hint_dom_N"/>
</dbReference>
<dbReference type="InterPro" id="IPR036844">
    <property type="entry name" value="Hint_dom_sf"/>
</dbReference>
<dbReference type="InterPro" id="IPR007868">
    <property type="entry name" value="Hom_end_hint"/>
</dbReference>
<dbReference type="InterPro" id="IPR007869">
    <property type="entry name" value="Homing_endonuc_PI-Sce"/>
</dbReference>
<dbReference type="InterPro" id="IPR027434">
    <property type="entry name" value="Homing_endonucl"/>
</dbReference>
<dbReference type="InterPro" id="IPR006142">
    <property type="entry name" value="INTEIN"/>
</dbReference>
<dbReference type="InterPro" id="IPR004042">
    <property type="entry name" value="Intein_endonuc_central"/>
</dbReference>
<dbReference type="Pfam" id="PF05204">
    <property type="entry name" value="Hom_end"/>
    <property type="match status" value="1"/>
</dbReference>
<dbReference type="Pfam" id="PF05203">
    <property type="entry name" value="Hom_end_hint"/>
    <property type="match status" value="1"/>
</dbReference>
<dbReference type="PRINTS" id="PR00379">
    <property type="entry name" value="INTEIN"/>
</dbReference>
<dbReference type="SMART" id="SM00306">
    <property type="entry name" value="HintN"/>
    <property type="match status" value="1"/>
</dbReference>
<dbReference type="SUPFAM" id="SSF51294">
    <property type="entry name" value="Hedgehog/intein (Hint) domain"/>
    <property type="match status" value="1"/>
</dbReference>
<dbReference type="SUPFAM" id="SSF55608">
    <property type="entry name" value="Homing endonucleases"/>
    <property type="match status" value="2"/>
</dbReference>
<dbReference type="PROSITE" id="PS50819">
    <property type="entry name" value="INTEIN_ENDONUCLEASE"/>
    <property type="match status" value="1"/>
</dbReference>
<keyword id="KW-0238">DNA-binding</keyword>
<keyword id="KW-0255">Endonuclease</keyword>
<keyword id="KW-0378">Hydrolase</keyword>
<keyword id="KW-0479">Metal-binding</keyword>
<keyword id="KW-0540">Nuclease</keyword>
<keyword id="KW-0539">Nucleus</keyword>
<keyword id="KW-1185">Reference proteome</keyword>
<keyword id="KW-0862">Zinc</keyword>
<keyword id="KW-0863">Zinc-finger</keyword>